<comment type="function">
    <text evidence="1">Catalyzes the NADPH-dependent rearrangement and reduction of 1-deoxy-D-xylulose-5-phosphate (DXP) to 2-C-methyl-D-erythritol 4-phosphate (MEP).</text>
</comment>
<comment type="catalytic activity">
    <reaction evidence="1">
        <text>2-C-methyl-D-erythritol 4-phosphate + NADP(+) = 1-deoxy-D-xylulose 5-phosphate + NADPH + H(+)</text>
        <dbReference type="Rhea" id="RHEA:13717"/>
        <dbReference type="ChEBI" id="CHEBI:15378"/>
        <dbReference type="ChEBI" id="CHEBI:57783"/>
        <dbReference type="ChEBI" id="CHEBI:57792"/>
        <dbReference type="ChEBI" id="CHEBI:58262"/>
        <dbReference type="ChEBI" id="CHEBI:58349"/>
        <dbReference type="EC" id="1.1.1.267"/>
    </reaction>
    <physiologicalReaction direction="right-to-left" evidence="1">
        <dbReference type="Rhea" id="RHEA:13719"/>
    </physiologicalReaction>
</comment>
<comment type="cofactor">
    <cofactor evidence="1">
        <name>Mg(2+)</name>
        <dbReference type="ChEBI" id="CHEBI:18420"/>
    </cofactor>
    <cofactor evidence="1">
        <name>Mn(2+)</name>
        <dbReference type="ChEBI" id="CHEBI:29035"/>
    </cofactor>
</comment>
<comment type="pathway">
    <text evidence="1">Isoprenoid biosynthesis; isopentenyl diphosphate biosynthesis via DXP pathway; isopentenyl diphosphate from 1-deoxy-D-xylulose 5-phosphate: step 1/6.</text>
</comment>
<comment type="similarity">
    <text evidence="1">Belongs to the DXR family.</text>
</comment>
<evidence type="ECO:0000255" key="1">
    <source>
        <dbReference type="HAMAP-Rule" id="MF_00183"/>
    </source>
</evidence>
<sequence>MKKVSVLGSTGSVGKKTVDLLSKRKEEYQVEALSAHSNFALLAHQAKLLNAKYVAISDERLYKDLKESLLGTDVKIAIGATNVAAIPVDLSVVAIVGIAGLGPVMEVIESGTKVIALANKESIVCGGKLLLKKAKEKNVQIIPIDSEHNAIFQILQNDDKCVEKIILTASGGPFLNYSLEQLRNIMVDQALSHPTWNMGKKISVDSATMMNKALEIIEAHNLFNISPDKIEAVVHPESIVHGIVTYKDGFNFAVLAETDMAIPISYALSWPERLVLNYKLDLTKQGKLTFQEPDHKHFPVLKLSMEVLNSSTPQTNSIVLNAANEIAVNEFLKSRIGFLEIVEVVESTMESFGSYTDINSLSDIINIDCESRIIAHKIVESKVVAYS</sequence>
<dbReference type="EC" id="1.1.1.267" evidence="1"/>
<dbReference type="EMBL" id="CP001391">
    <property type="protein sequence ID" value="ACN95656.1"/>
    <property type="molecule type" value="Genomic_DNA"/>
</dbReference>
<dbReference type="RefSeq" id="WP_007548967.1">
    <property type="nucleotide sequence ID" value="NZ_MKIF01000065.1"/>
</dbReference>
<dbReference type="SMR" id="C0R414"/>
<dbReference type="STRING" id="66084.WRi_009400"/>
<dbReference type="KEGG" id="wri:WRi_009400"/>
<dbReference type="HOGENOM" id="CLU_035714_4_0_5"/>
<dbReference type="UniPathway" id="UPA00056">
    <property type="reaction ID" value="UER00092"/>
</dbReference>
<dbReference type="Proteomes" id="UP000001293">
    <property type="component" value="Chromosome"/>
</dbReference>
<dbReference type="GO" id="GO:0030604">
    <property type="term" value="F:1-deoxy-D-xylulose-5-phosphate reductoisomerase activity"/>
    <property type="evidence" value="ECO:0007669"/>
    <property type="project" value="UniProtKB-UniRule"/>
</dbReference>
<dbReference type="GO" id="GO:0030145">
    <property type="term" value="F:manganese ion binding"/>
    <property type="evidence" value="ECO:0007669"/>
    <property type="project" value="TreeGrafter"/>
</dbReference>
<dbReference type="GO" id="GO:0070402">
    <property type="term" value="F:NADPH binding"/>
    <property type="evidence" value="ECO:0007669"/>
    <property type="project" value="InterPro"/>
</dbReference>
<dbReference type="GO" id="GO:0051484">
    <property type="term" value="P:isopentenyl diphosphate biosynthetic process, methylerythritol 4-phosphate pathway involved in terpenoid biosynthetic process"/>
    <property type="evidence" value="ECO:0007669"/>
    <property type="project" value="TreeGrafter"/>
</dbReference>
<dbReference type="FunFam" id="3.40.50.720:FF:000045">
    <property type="entry name" value="1-deoxy-D-xylulose 5-phosphate reductoisomerase"/>
    <property type="match status" value="1"/>
</dbReference>
<dbReference type="Gene3D" id="1.10.1740.10">
    <property type="match status" value="1"/>
</dbReference>
<dbReference type="Gene3D" id="3.40.50.720">
    <property type="entry name" value="NAD(P)-binding Rossmann-like Domain"/>
    <property type="match status" value="1"/>
</dbReference>
<dbReference type="HAMAP" id="MF_00183">
    <property type="entry name" value="DXP_reductoisom"/>
    <property type="match status" value="1"/>
</dbReference>
<dbReference type="InterPro" id="IPR003821">
    <property type="entry name" value="DXP_reductoisomerase"/>
</dbReference>
<dbReference type="InterPro" id="IPR013644">
    <property type="entry name" value="DXP_reductoisomerase_C"/>
</dbReference>
<dbReference type="InterPro" id="IPR013512">
    <property type="entry name" value="DXP_reductoisomerase_N"/>
</dbReference>
<dbReference type="InterPro" id="IPR026877">
    <property type="entry name" value="DXPR_C"/>
</dbReference>
<dbReference type="InterPro" id="IPR036169">
    <property type="entry name" value="DXPR_C_sf"/>
</dbReference>
<dbReference type="InterPro" id="IPR036291">
    <property type="entry name" value="NAD(P)-bd_dom_sf"/>
</dbReference>
<dbReference type="NCBIfam" id="TIGR00243">
    <property type="entry name" value="Dxr"/>
    <property type="match status" value="1"/>
</dbReference>
<dbReference type="PANTHER" id="PTHR30525">
    <property type="entry name" value="1-DEOXY-D-XYLULOSE 5-PHOSPHATE REDUCTOISOMERASE"/>
    <property type="match status" value="1"/>
</dbReference>
<dbReference type="PANTHER" id="PTHR30525:SF0">
    <property type="entry name" value="1-DEOXY-D-XYLULOSE 5-PHOSPHATE REDUCTOISOMERASE, CHLOROPLASTIC"/>
    <property type="match status" value="1"/>
</dbReference>
<dbReference type="Pfam" id="PF08436">
    <property type="entry name" value="DXP_redisom_C"/>
    <property type="match status" value="1"/>
</dbReference>
<dbReference type="Pfam" id="PF02670">
    <property type="entry name" value="DXP_reductoisom"/>
    <property type="match status" value="1"/>
</dbReference>
<dbReference type="Pfam" id="PF13288">
    <property type="entry name" value="DXPR_C"/>
    <property type="match status" value="1"/>
</dbReference>
<dbReference type="PIRSF" id="PIRSF006205">
    <property type="entry name" value="Dxp_reductismrs"/>
    <property type="match status" value="1"/>
</dbReference>
<dbReference type="SUPFAM" id="SSF69055">
    <property type="entry name" value="1-deoxy-D-xylulose-5-phosphate reductoisomerase, C-terminal domain"/>
    <property type="match status" value="1"/>
</dbReference>
<dbReference type="SUPFAM" id="SSF55347">
    <property type="entry name" value="Glyceraldehyde-3-phosphate dehydrogenase-like, C-terminal domain"/>
    <property type="match status" value="1"/>
</dbReference>
<dbReference type="SUPFAM" id="SSF51735">
    <property type="entry name" value="NAD(P)-binding Rossmann-fold domains"/>
    <property type="match status" value="1"/>
</dbReference>
<reference key="1">
    <citation type="journal article" date="2009" name="Proc. Natl. Acad. Sci. U.S.A.">
        <title>The mosaic genome structure of the Wolbachia wRi strain infecting Drosophila simulans.</title>
        <authorList>
            <person name="Klasson L."/>
            <person name="Westberg J."/>
            <person name="Sapountzis P."/>
            <person name="Naeslund K."/>
            <person name="Lutnaes Y."/>
            <person name="Darby A.C."/>
            <person name="Veneti Z."/>
            <person name="Chen L."/>
            <person name="Braig H.R."/>
            <person name="Garrett R."/>
            <person name="Bourtzis K."/>
            <person name="Andersson S.G."/>
        </authorList>
    </citation>
    <scope>NUCLEOTIDE SEQUENCE [LARGE SCALE GENOMIC DNA]</scope>
    <source>
        <strain>wRi</strain>
    </source>
</reference>
<proteinExistence type="inferred from homology"/>
<protein>
    <recommendedName>
        <fullName evidence="1">1-deoxy-D-xylulose 5-phosphate reductoisomerase</fullName>
        <shortName evidence="1">DXP reductoisomerase</shortName>
        <ecNumber evidence="1">1.1.1.267</ecNumber>
    </recommendedName>
    <alternativeName>
        <fullName evidence="1">1-deoxyxylulose-5-phosphate reductoisomerase</fullName>
    </alternativeName>
    <alternativeName>
        <fullName evidence="1">2-C-methyl-D-erythritol 4-phosphate synthase</fullName>
    </alternativeName>
</protein>
<accession>C0R414</accession>
<keyword id="KW-0414">Isoprene biosynthesis</keyword>
<keyword id="KW-0464">Manganese</keyword>
<keyword id="KW-0479">Metal-binding</keyword>
<keyword id="KW-0521">NADP</keyword>
<keyword id="KW-0560">Oxidoreductase</keyword>
<feature type="chain" id="PRO_1000124117" description="1-deoxy-D-xylulose 5-phosphate reductoisomerase">
    <location>
        <begin position="1"/>
        <end position="387"/>
    </location>
</feature>
<feature type="binding site" evidence="1">
    <location>
        <position position="10"/>
    </location>
    <ligand>
        <name>NADPH</name>
        <dbReference type="ChEBI" id="CHEBI:57783"/>
    </ligand>
</feature>
<feature type="binding site" evidence="1">
    <location>
        <position position="11"/>
    </location>
    <ligand>
        <name>NADPH</name>
        <dbReference type="ChEBI" id="CHEBI:57783"/>
    </ligand>
</feature>
<feature type="binding site" evidence="1">
    <location>
        <position position="12"/>
    </location>
    <ligand>
        <name>NADPH</name>
        <dbReference type="ChEBI" id="CHEBI:57783"/>
    </ligand>
</feature>
<feature type="binding site" evidence="1">
    <location>
        <position position="13"/>
    </location>
    <ligand>
        <name>NADPH</name>
        <dbReference type="ChEBI" id="CHEBI:57783"/>
    </ligand>
</feature>
<feature type="binding site" evidence="1">
    <location>
        <position position="38"/>
    </location>
    <ligand>
        <name>NADPH</name>
        <dbReference type="ChEBI" id="CHEBI:57783"/>
    </ligand>
</feature>
<feature type="binding site" evidence="1">
    <location>
        <position position="119"/>
    </location>
    <ligand>
        <name>NADPH</name>
        <dbReference type="ChEBI" id="CHEBI:57783"/>
    </ligand>
</feature>
<feature type="binding site" evidence="1">
    <location>
        <position position="120"/>
    </location>
    <ligand>
        <name>1-deoxy-D-xylulose 5-phosphate</name>
        <dbReference type="ChEBI" id="CHEBI:57792"/>
    </ligand>
</feature>
<feature type="binding site" evidence="1">
    <location>
        <position position="121"/>
    </location>
    <ligand>
        <name>NADPH</name>
        <dbReference type="ChEBI" id="CHEBI:57783"/>
    </ligand>
</feature>
<feature type="binding site" evidence="1">
    <location>
        <position position="145"/>
    </location>
    <ligand>
        <name>Mn(2+)</name>
        <dbReference type="ChEBI" id="CHEBI:29035"/>
    </ligand>
</feature>
<feature type="binding site" evidence="1">
    <location>
        <position position="146"/>
    </location>
    <ligand>
        <name>1-deoxy-D-xylulose 5-phosphate</name>
        <dbReference type="ChEBI" id="CHEBI:57792"/>
    </ligand>
</feature>
<feature type="binding site" evidence="1">
    <location>
        <position position="147"/>
    </location>
    <ligand>
        <name>1-deoxy-D-xylulose 5-phosphate</name>
        <dbReference type="ChEBI" id="CHEBI:57792"/>
    </ligand>
</feature>
<feature type="binding site" evidence="1">
    <location>
        <position position="147"/>
    </location>
    <ligand>
        <name>Mn(2+)</name>
        <dbReference type="ChEBI" id="CHEBI:29035"/>
    </ligand>
</feature>
<feature type="binding site" evidence="1">
    <location>
        <position position="170"/>
    </location>
    <ligand>
        <name>1-deoxy-D-xylulose 5-phosphate</name>
        <dbReference type="ChEBI" id="CHEBI:57792"/>
    </ligand>
</feature>
<feature type="binding site" evidence="1">
    <location>
        <position position="193"/>
    </location>
    <ligand>
        <name>1-deoxy-D-xylulose 5-phosphate</name>
        <dbReference type="ChEBI" id="CHEBI:57792"/>
    </ligand>
</feature>
<feature type="binding site" evidence="1">
    <location>
        <position position="199"/>
    </location>
    <ligand>
        <name>NADPH</name>
        <dbReference type="ChEBI" id="CHEBI:57783"/>
    </ligand>
</feature>
<feature type="binding site" evidence="1">
    <location>
        <position position="206"/>
    </location>
    <ligand>
        <name>1-deoxy-D-xylulose 5-phosphate</name>
        <dbReference type="ChEBI" id="CHEBI:57792"/>
    </ligand>
</feature>
<feature type="binding site" evidence="1">
    <location>
        <position position="211"/>
    </location>
    <ligand>
        <name>1-deoxy-D-xylulose 5-phosphate</name>
        <dbReference type="ChEBI" id="CHEBI:57792"/>
    </ligand>
</feature>
<feature type="binding site" evidence="1">
    <location>
        <position position="212"/>
    </location>
    <ligand>
        <name>1-deoxy-D-xylulose 5-phosphate</name>
        <dbReference type="ChEBI" id="CHEBI:57792"/>
    </ligand>
</feature>
<feature type="binding site" evidence="1">
    <location>
        <position position="215"/>
    </location>
    <ligand>
        <name>1-deoxy-D-xylulose 5-phosphate</name>
        <dbReference type="ChEBI" id="CHEBI:57792"/>
    </ligand>
</feature>
<feature type="binding site" evidence="1">
    <location>
        <position position="215"/>
    </location>
    <ligand>
        <name>Mn(2+)</name>
        <dbReference type="ChEBI" id="CHEBI:29035"/>
    </ligand>
</feature>
<gene>
    <name evidence="1" type="primary">dxr</name>
    <name type="ordered locus">WRi_009400</name>
</gene>
<organism>
    <name type="scientific">Wolbachia sp. subsp. Drosophila simulans (strain wRi)</name>
    <dbReference type="NCBI Taxonomy" id="66084"/>
    <lineage>
        <taxon>Bacteria</taxon>
        <taxon>Pseudomonadati</taxon>
        <taxon>Pseudomonadota</taxon>
        <taxon>Alphaproteobacteria</taxon>
        <taxon>Rickettsiales</taxon>
        <taxon>Anaplasmataceae</taxon>
        <taxon>Wolbachieae</taxon>
        <taxon>Wolbachia</taxon>
    </lineage>
</organism>
<name>DXR_WOLWR</name>